<name>BRD4A_XENLA</name>
<accession>Q08D75</accession>
<sequence>MSSETGLGTRLRATSGMGDGIEGAQMLGQHQPALPQPQATVMNNPDPPEITRPNQPKRQTNQLQYLLKAVLKTLWKHQFAWPFQLPVDVVKLNLPDYHKIIKTPMDMGTIKKRLENHYYWNAQECIQDFNTMFTNCYIYNKPGDDIVLMAEALEKLFLQKISEMPQEETELTVVQSKGRGRGRKEQDASITPMRTRVLSGSLEDKSTVKPPVTPVSKPSTPTPPTVTRAPTPPQTRPQQGRPPAIAQAPIRFSPTISQDVVVPTTVAPTLVPPPLSNHPAVIHTAAQPAKTKKGVKRKADTTTPTTHDPLHESSPLPSDPKPPRAVPRKENGRQIRPTKKTEVPDSQLPAPPVLHPQPAPNAERDTKTSEQLRYCASIIREMFSKKHQAYAWPFYKPVDVEALGLHDYCEIIKHPMDLGTIKVKMENRDYKEAQEFASDVRLMFSNCYKYNPPDHEVVIMARKLQDVFEMRFAKMPDEPEEAPAPVPSLAPGPPAPSIKGPPPTSSDSSSDSTSDSESSSDSEEERAQRLAELQEQLKAVHEQLAALSQPQPNKPKKKEREKRKEKHKRKEEVEEPRKGRIREPPAKKPKKSVQGSGGTPSIKKEAPPPAPRPARPAPPSAPCESSEEETQRCRPMSYEEKRQLSLDINKLPGEKLGRVVHIIQSREPSLKNSNPDEIEIDFETLKPSTLRELERYVTSCLRKKRKSQDKIEAPTSGTVKVKGYSSSESESSSESSTSDSEESDSETAPNQKKKGHSGRESRKHHHPMQQPLAAQLPVMKPPSPTIAPSYPLPSSLDSSHISLHHPLHPANVFDAVMQLPPDLPPHLTGQTEHCSPPHLNQHALTSPPALHNAMPQQPSRPSNRAAALPTKPAMPPSASPPPPAPQPPQQPHVHHHHHHHAQPPHVLLEDDEPPSPLTGLPPYLQPLQKSQQPPTQSPIHSLLTSVKVQSQTPMAAPPQSMRHLQPLVYPPPPSTATTAPPPASSHIHQLQSSPVVPQQLPAGQAPPPPQQQQQHPALQGTLVSSHQQHVQHQHAKQQQVIQHHHHHPSPRQQKQETYPGGHLRDAPSPLLLHSPPVPPYPGLTHPPSPQSVQPKKQEIRGASVLQPQPVVMKEDKRHSPSIRPEGFSPGMRPEPQKVPEVLKGPSHIQPRPDLKKMDGGRPIRLPDQSLPPQGMPEKEKQKQEPKTPVAPKKDIKIKNMGSWAGLMQKPPVTPTSAGKSTSDSFELFRRQAREKEERERALKLQAEQAERVRREQDRMSRTREDDEVQDQARKAHEEARRRQEQQQQQQHVQSNLPTAPSPAQSSQPMMDQREMARKREQERRRRQAMAPSIDMNFQSELMEIFEQNLFS</sequence>
<organism>
    <name type="scientific">Xenopus laevis</name>
    <name type="common">African clawed frog</name>
    <dbReference type="NCBI Taxonomy" id="8355"/>
    <lineage>
        <taxon>Eukaryota</taxon>
        <taxon>Metazoa</taxon>
        <taxon>Chordata</taxon>
        <taxon>Craniata</taxon>
        <taxon>Vertebrata</taxon>
        <taxon>Euteleostomi</taxon>
        <taxon>Amphibia</taxon>
        <taxon>Batrachia</taxon>
        <taxon>Anura</taxon>
        <taxon>Pipoidea</taxon>
        <taxon>Pipidae</taxon>
        <taxon>Xenopodinae</taxon>
        <taxon>Xenopus</taxon>
        <taxon>Xenopus</taxon>
    </lineage>
</organism>
<evidence type="ECO:0000250" key="1"/>
<evidence type="ECO:0000250" key="2">
    <source>
        <dbReference type="UniProtKB" id="O60885"/>
    </source>
</evidence>
<evidence type="ECO:0000255" key="3">
    <source>
        <dbReference type="PROSITE-ProRule" id="PRU00035"/>
    </source>
</evidence>
<evidence type="ECO:0000255" key="4">
    <source>
        <dbReference type="PROSITE-ProRule" id="PRU00857"/>
    </source>
</evidence>
<evidence type="ECO:0000256" key="5">
    <source>
        <dbReference type="SAM" id="MobiDB-lite"/>
    </source>
</evidence>
<evidence type="ECO:0000305" key="6"/>
<gene>
    <name type="primary">brd4-a</name>
</gene>
<dbReference type="EMBL" id="EU236154">
    <property type="protein sequence ID" value="ABW97744.1"/>
    <property type="molecule type" value="mRNA"/>
</dbReference>
<dbReference type="EMBL" id="BC123908">
    <property type="protein sequence ID" value="AAI23909.1"/>
    <property type="molecule type" value="mRNA"/>
</dbReference>
<dbReference type="RefSeq" id="NP_001085290.1">
    <property type="nucleotide sequence ID" value="NM_001091821.1"/>
</dbReference>
<dbReference type="RefSeq" id="XP_018109724.1">
    <property type="nucleotide sequence ID" value="XM_018254235.1"/>
</dbReference>
<dbReference type="RefSeq" id="XP_018109725.1">
    <property type="nucleotide sequence ID" value="XM_018254236.1"/>
</dbReference>
<dbReference type="RefSeq" id="XP_018109726.1">
    <property type="nucleotide sequence ID" value="XM_018254237.1"/>
</dbReference>
<dbReference type="SMR" id="Q08D75"/>
<dbReference type="DNASU" id="443648"/>
<dbReference type="GeneID" id="443648"/>
<dbReference type="KEGG" id="xla:443648"/>
<dbReference type="AGR" id="Xenbase:XB-GENE-17330650"/>
<dbReference type="CTD" id="443648"/>
<dbReference type="Xenbase" id="XB-GENE-17330650">
    <property type="gene designation" value="brd4.S"/>
</dbReference>
<dbReference type="OMA" id="ERMRWAR"/>
<dbReference type="OrthoDB" id="21449at2759"/>
<dbReference type="Proteomes" id="UP000186698">
    <property type="component" value="Chromosome 3S"/>
</dbReference>
<dbReference type="Bgee" id="443648">
    <property type="expression patterns" value="Expressed in egg cell and 19 other cell types or tissues"/>
</dbReference>
<dbReference type="GO" id="GO:0000785">
    <property type="term" value="C:chromatin"/>
    <property type="evidence" value="ECO:0000318"/>
    <property type="project" value="GO_Central"/>
</dbReference>
<dbReference type="GO" id="GO:0005634">
    <property type="term" value="C:nucleus"/>
    <property type="evidence" value="ECO:0000250"/>
    <property type="project" value="UniProtKB"/>
</dbReference>
<dbReference type="GO" id="GO:0070577">
    <property type="term" value="F:lysine-acetylated histone binding"/>
    <property type="evidence" value="ECO:0000318"/>
    <property type="project" value="GO_Central"/>
</dbReference>
<dbReference type="GO" id="GO:0002039">
    <property type="term" value="F:p53 binding"/>
    <property type="evidence" value="ECO:0000250"/>
    <property type="project" value="UniProtKB"/>
</dbReference>
<dbReference type="GO" id="GO:0000976">
    <property type="term" value="F:transcription cis-regulatory region binding"/>
    <property type="evidence" value="ECO:0000250"/>
    <property type="project" value="UniProtKB"/>
</dbReference>
<dbReference type="GO" id="GO:0006338">
    <property type="term" value="P:chromatin remodeling"/>
    <property type="evidence" value="ECO:0000318"/>
    <property type="project" value="GO_Central"/>
</dbReference>
<dbReference type="GO" id="GO:0043123">
    <property type="term" value="P:positive regulation of canonical NF-kappaB signal transduction"/>
    <property type="evidence" value="ECO:0000250"/>
    <property type="project" value="UniProtKB"/>
</dbReference>
<dbReference type="GO" id="GO:2000330">
    <property type="term" value="P:positive regulation of T-helper 17 cell lineage commitment"/>
    <property type="evidence" value="ECO:0000250"/>
    <property type="project" value="UniProtKB"/>
</dbReference>
<dbReference type="GO" id="GO:0045944">
    <property type="term" value="P:positive regulation of transcription by RNA polymerase II"/>
    <property type="evidence" value="ECO:0000250"/>
    <property type="project" value="UniProtKB"/>
</dbReference>
<dbReference type="GO" id="GO:0032968">
    <property type="term" value="P:positive regulation of transcription elongation by RNA polymerase II"/>
    <property type="evidence" value="ECO:0000250"/>
    <property type="project" value="UniProtKB"/>
</dbReference>
<dbReference type="GO" id="GO:0006355">
    <property type="term" value="P:regulation of DNA-templated transcription"/>
    <property type="evidence" value="ECO:0000318"/>
    <property type="project" value="GO_Central"/>
</dbReference>
<dbReference type="GO" id="GO:0050727">
    <property type="term" value="P:regulation of inflammatory response"/>
    <property type="evidence" value="ECO:0000250"/>
    <property type="project" value="UniProtKB"/>
</dbReference>
<dbReference type="CDD" id="cd05497">
    <property type="entry name" value="Bromo_Brdt_I_like"/>
    <property type="match status" value="1"/>
</dbReference>
<dbReference type="CDD" id="cd05498">
    <property type="entry name" value="Bromo_Brdt_II_like"/>
    <property type="match status" value="1"/>
</dbReference>
<dbReference type="FunFam" id="1.20.920.10:FF:000003">
    <property type="entry name" value="Bromodomain-containing protein 2"/>
    <property type="match status" value="1"/>
</dbReference>
<dbReference type="FunFam" id="1.20.1270.220:FF:000001">
    <property type="entry name" value="bromodomain-containing protein 2 isoform X1"/>
    <property type="match status" value="1"/>
</dbReference>
<dbReference type="FunFam" id="1.20.920.10:FF:000002">
    <property type="entry name" value="Bromodomain-containing protein 4"/>
    <property type="match status" value="1"/>
</dbReference>
<dbReference type="Gene3D" id="1.20.1270.220">
    <property type="match status" value="1"/>
</dbReference>
<dbReference type="Gene3D" id="1.20.920.10">
    <property type="entry name" value="Bromodomain-like"/>
    <property type="match status" value="2"/>
</dbReference>
<dbReference type="InterPro" id="IPR031354">
    <property type="entry name" value="BRD4_CDT"/>
</dbReference>
<dbReference type="InterPro" id="IPR043508">
    <property type="entry name" value="Bromo_Brdt_I"/>
</dbReference>
<dbReference type="InterPro" id="IPR043509">
    <property type="entry name" value="Bromo_Brdt_II"/>
</dbReference>
<dbReference type="InterPro" id="IPR050935">
    <property type="entry name" value="Bromo_chromatin_reader"/>
</dbReference>
<dbReference type="InterPro" id="IPR001487">
    <property type="entry name" value="Bromodomain"/>
</dbReference>
<dbReference type="InterPro" id="IPR036427">
    <property type="entry name" value="Bromodomain-like_sf"/>
</dbReference>
<dbReference type="InterPro" id="IPR018359">
    <property type="entry name" value="Bromodomain_CS"/>
</dbReference>
<dbReference type="InterPro" id="IPR027353">
    <property type="entry name" value="NET_dom"/>
</dbReference>
<dbReference type="InterPro" id="IPR038336">
    <property type="entry name" value="NET_sf"/>
</dbReference>
<dbReference type="PANTHER" id="PTHR22880:SF143">
    <property type="entry name" value="BROMODOMAIN-CONTAINING PROTEIN 4"/>
    <property type="match status" value="1"/>
</dbReference>
<dbReference type="PANTHER" id="PTHR22880">
    <property type="entry name" value="FALZ-RELATED BROMODOMAIN-CONTAINING PROTEINS"/>
    <property type="match status" value="1"/>
</dbReference>
<dbReference type="Pfam" id="PF17035">
    <property type="entry name" value="BET"/>
    <property type="match status" value="1"/>
</dbReference>
<dbReference type="Pfam" id="PF17105">
    <property type="entry name" value="BRD4_CDT"/>
    <property type="match status" value="1"/>
</dbReference>
<dbReference type="Pfam" id="PF00439">
    <property type="entry name" value="Bromodomain"/>
    <property type="match status" value="2"/>
</dbReference>
<dbReference type="PRINTS" id="PR00503">
    <property type="entry name" value="BROMODOMAIN"/>
</dbReference>
<dbReference type="SMART" id="SM00297">
    <property type="entry name" value="BROMO"/>
    <property type="match status" value="2"/>
</dbReference>
<dbReference type="SUPFAM" id="SSF47370">
    <property type="entry name" value="Bromodomain"/>
    <property type="match status" value="2"/>
</dbReference>
<dbReference type="PROSITE" id="PS00633">
    <property type="entry name" value="BROMODOMAIN_1"/>
    <property type="match status" value="1"/>
</dbReference>
<dbReference type="PROSITE" id="PS50014">
    <property type="entry name" value="BROMODOMAIN_2"/>
    <property type="match status" value="2"/>
</dbReference>
<dbReference type="PROSITE" id="PS51525">
    <property type="entry name" value="NET"/>
    <property type="match status" value="1"/>
</dbReference>
<keyword id="KW-0103">Bromodomain</keyword>
<keyword id="KW-0156">Chromatin regulator</keyword>
<keyword id="KW-0158">Chromosome</keyword>
<keyword id="KW-0539">Nucleus</keyword>
<keyword id="KW-1185">Reference proteome</keyword>
<keyword id="KW-0677">Repeat</keyword>
<keyword id="KW-0804">Transcription</keyword>
<keyword id="KW-0805">Transcription regulation</keyword>
<proteinExistence type="evidence at transcript level"/>
<comment type="function">
    <text evidence="2">Chromatin reader protein that recognizes and binds acetylated histones and plays a key role in transmission of epigenetic memory across cell divisions and transcription regulation. Remains associated with acetylated chromatin throughout the entire cell cycle and provides epigenetic memory for postmitotic G1 gene transcription by preserving acetylated chromatin status and maintaining high-order chromatin structure. During interphase, plays a key role in regulating the transcription of signal-inducible genes by associating with the P-TEFb complex and recruiting it to promoters (By similarity).</text>
</comment>
<comment type="subcellular location">
    <subcellularLocation>
        <location evidence="2">Nucleus</location>
    </subcellularLocation>
    <subcellularLocation>
        <location evidence="2">Chromosome</location>
    </subcellularLocation>
    <text evidence="1">Associates with acetylated chromatin.</text>
</comment>
<comment type="domain">
    <text evidence="2">The 2 bromo domains mediate specific binding to acetylated histones. The exact combination of modified histone tails required to recruit brd4 to target genes is still unclear. The first bromo domain has high affinity for acetylated histone H4 tail, whereas the second bromo domain recognizes multiply acetylated marks in histone H3 (By similarity).</text>
</comment>
<comment type="similarity">
    <text evidence="6">Belongs to the BET family.</text>
</comment>
<protein>
    <recommendedName>
        <fullName>Bromodomain-containing protein 4A</fullName>
    </recommendedName>
</protein>
<feature type="chain" id="PRO_0000423295" description="Bromodomain-containing protein 4A">
    <location>
        <begin position="1"/>
        <end position="1351"/>
    </location>
</feature>
<feature type="domain" description="Bromo 1" evidence="3">
    <location>
        <begin position="58"/>
        <end position="164"/>
    </location>
</feature>
<feature type="domain" description="Bromo 2" evidence="3">
    <location>
        <begin position="366"/>
        <end position="475"/>
    </location>
</feature>
<feature type="domain" description="NET" evidence="4">
    <location>
        <begin position="624"/>
        <end position="708"/>
    </location>
</feature>
<feature type="region of interest" description="Disordered" evidence="5">
    <location>
        <begin position="1"/>
        <end position="23"/>
    </location>
</feature>
<feature type="region of interest" description="Disordered" evidence="5">
    <location>
        <begin position="35"/>
        <end position="58"/>
    </location>
</feature>
<feature type="region of interest" description="Disordered" evidence="5">
    <location>
        <begin position="168"/>
        <end position="244"/>
    </location>
</feature>
<feature type="region of interest" description="Disordered" evidence="5">
    <location>
        <begin position="285"/>
        <end position="368"/>
    </location>
</feature>
<feature type="region of interest" description="Disordered" evidence="5">
    <location>
        <begin position="478"/>
        <end position="638"/>
    </location>
</feature>
<feature type="region of interest" description="NPS region" evidence="1">
    <location>
        <begin position="504"/>
        <end position="522"/>
    </location>
</feature>
<feature type="region of interest" description="BID region" evidence="1">
    <location>
        <begin position="543"/>
        <end position="598"/>
    </location>
</feature>
<feature type="region of interest" description="Disordered" evidence="5">
    <location>
        <begin position="700"/>
        <end position="799"/>
    </location>
</feature>
<feature type="region of interest" description="Disordered" evidence="5">
    <location>
        <begin position="821"/>
        <end position="1334"/>
    </location>
</feature>
<feature type="region of interest" description="C-terminal (CTD) region" evidence="1">
    <location>
        <begin position="1051"/>
        <end position="1350"/>
    </location>
</feature>
<feature type="compositionally biased region" description="Low complexity" evidence="5">
    <location>
        <begin position="208"/>
        <end position="219"/>
    </location>
</feature>
<feature type="compositionally biased region" description="Pro residues" evidence="5">
    <location>
        <begin position="220"/>
        <end position="235"/>
    </location>
</feature>
<feature type="compositionally biased region" description="Basic and acidic residues" evidence="5">
    <location>
        <begin position="327"/>
        <end position="343"/>
    </location>
</feature>
<feature type="compositionally biased region" description="Pro residues" evidence="5">
    <location>
        <begin position="349"/>
        <end position="359"/>
    </location>
</feature>
<feature type="compositionally biased region" description="Pro residues" evidence="5">
    <location>
        <begin position="482"/>
        <end position="504"/>
    </location>
</feature>
<feature type="compositionally biased region" description="Low complexity" evidence="5">
    <location>
        <begin position="505"/>
        <end position="517"/>
    </location>
</feature>
<feature type="compositionally biased region" description="Basic residues" evidence="5">
    <location>
        <begin position="554"/>
        <end position="569"/>
    </location>
</feature>
<feature type="compositionally biased region" description="Basic and acidic residues" evidence="5">
    <location>
        <begin position="570"/>
        <end position="586"/>
    </location>
</feature>
<feature type="compositionally biased region" description="Pro residues" evidence="5">
    <location>
        <begin position="607"/>
        <end position="621"/>
    </location>
</feature>
<feature type="compositionally biased region" description="Basic and acidic residues" evidence="5">
    <location>
        <begin position="629"/>
        <end position="638"/>
    </location>
</feature>
<feature type="compositionally biased region" description="Low complexity" evidence="5">
    <location>
        <begin position="725"/>
        <end position="738"/>
    </location>
</feature>
<feature type="compositionally biased region" description="Basic residues" evidence="5">
    <location>
        <begin position="751"/>
        <end position="767"/>
    </location>
</feature>
<feature type="compositionally biased region" description="Low complexity" evidence="5">
    <location>
        <begin position="788"/>
        <end position="799"/>
    </location>
</feature>
<feature type="compositionally biased region" description="Pro residues" evidence="5">
    <location>
        <begin position="872"/>
        <end position="890"/>
    </location>
</feature>
<feature type="compositionally biased region" description="Basic residues" evidence="5">
    <location>
        <begin position="892"/>
        <end position="902"/>
    </location>
</feature>
<feature type="compositionally biased region" description="Polar residues" evidence="5">
    <location>
        <begin position="927"/>
        <end position="953"/>
    </location>
</feature>
<feature type="compositionally biased region" description="Pro residues" evidence="5">
    <location>
        <begin position="968"/>
        <end position="983"/>
    </location>
</feature>
<feature type="compositionally biased region" description="Low complexity" evidence="5">
    <location>
        <begin position="994"/>
        <end position="1003"/>
    </location>
</feature>
<feature type="compositionally biased region" description="Low complexity" evidence="5">
    <location>
        <begin position="1011"/>
        <end position="1028"/>
    </location>
</feature>
<feature type="compositionally biased region" description="Pro residues" evidence="5">
    <location>
        <begin position="1075"/>
        <end position="1089"/>
    </location>
</feature>
<feature type="compositionally biased region" description="Basic and acidic residues" evidence="5">
    <location>
        <begin position="1150"/>
        <end position="1161"/>
    </location>
</feature>
<feature type="compositionally biased region" description="Basic and acidic residues" evidence="5">
    <location>
        <begin position="1176"/>
        <end position="1197"/>
    </location>
</feature>
<feature type="compositionally biased region" description="Polar residues" evidence="5">
    <location>
        <begin position="1214"/>
        <end position="1224"/>
    </location>
</feature>
<feature type="compositionally biased region" description="Basic and acidic residues" evidence="5">
    <location>
        <begin position="1226"/>
        <end position="1284"/>
    </location>
</feature>
<feature type="compositionally biased region" description="Low complexity" evidence="5">
    <location>
        <begin position="1301"/>
        <end position="1310"/>
    </location>
</feature>
<feature type="compositionally biased region" description="Basic and acidic residues" evidence="5">
    <location>
        <begin position="1311"/>
        <end position="1323"/>
    </location>
</feature>
<feature type="site" description="Acetylated histone binding" evidence="2">
    <location>
        <position position="140"/>
    </location>
</feature>
<feature type="site" description="Acetylated histone binding" evidence="2">
    <location>
        <position position="451"/>
    </location>
</feature>
<reference key="1">
    <citation type="journal article" date="2008" name="Dev. Dyn.">
        <title>Brd4 associates with mitotic chromosomes throughout early zebrafish embryogenesis.</title>
        <authorList>
            <person name="Toyama R."/>
            <person name="Rebbert M.L."/>
            <person name="Dey A."/>
            <person name="Ozato K."/>
            <person name="Dawid I.B."/>
        </authorList>
    </citation>
    <scope>NUCLEOTIDE SEQUENCE [MRNA]</scope>
</reference>
<reference key="2">
    <citation type="submission" date="2006-09" db="EMBL/GenBank/DDBJ databases">
        <authorList>
            <consortium name="NIH - Xenopus Gene Collection (XGC) project"/>
        </authorList>
    </citation>
    <scope>NUCLEOTIDE SEQUENCE [LARGE SCALE MRNA]</scope>
    <source>
        <tissue>Oocyte</tissue>
    </source>
</reference>